<evidence type="ECO:0000255" key="1">
    <source>
        <dbReference type="HAMAP-Rule" id="MF_00736"/>
    </source>
</evidence>
<evidence type="ECO:0000305" key="2"/>
<organism>
    <name type="scientific">Burkholderia lata (strain ATCC 17760 / DSM 23089 / LMG 22485 / NCIMB 9086 / R18194 / 383)</name>
    <dbReference type="NCBI Taxonomy" id="482957"/>
    <lineage>
        <taxon>Bacteria</taxon>
        <taxon>Pseudomonadati</taxon>
        <taxon>Pseudomonadota</taxon>
        <taxon>Betaproteobacteria</taxon>
        <taxon>Burkholderiales</taxon>
        <taxon>Burkholderiaceae</taxon>
        <taxon>Burkholderia</taxon>
        <taxon>Burkholderia cepacia complex</taxon>
    </lineage>
</organism>
<name>RL11_BURL3</name>
<dbReference type="EMBL" id="CP000151">
    <property type="protein sequence ID" value="ABB07037.1"/>
    <property type="molecule type" value="Genomic_DNA"/>
</dbReference>
<dbReference type="RefSeq" id="WP_006477201.1">
    <property type="nucleotide sequence ID" value="NZ_LDWP01000105.1"/>
</dbReference>
<dbReference type="SMR" id="Q39KH9"/>
<dbReference type="GeneID" id="93193463"/>
<dbReference type="KEGG" id="bur:Bcep18194_A3435"/>
<dbReference type="HOGENOM" id="CLU_074237_2_0_4"/>
<dbReference type="Proteomes" id="UP000002705">
    <property type="component" value="Chromosome 1"/>
</dbReference>
<dbReference type="GO" id="GO:0022625">
    <property type="term" value="C:cytosolic large ribosomal subunit"/>
    <property type="evidence" value="ECO:0007669"/>
    <property type="project" value="TreeGrafter"/>
</dbReference>
<dbReference type="GO" id="GO:0070180">
    <property type="term" value="F:large ribosomal subunit rRNA binding"/>
    <property type="evidence" value="ECO:0007669"/>
    <property type="project" value="UniProtKB-UniRule"/>
</dbReference>
<dbReference type="GO" id="GO:0003735">
    <property type="term" value="F:structural constituent of ribosome"/>
    <property type="evidence" value="ECO:0007669"/>
    <property type="project" value="InterPro"/>
</dbReference>
<dbReference type="GO" id="GO:0006412">
    <property type="term" value="P:translation"/>
    <property type="evidence" value="ECO:0007669"/>
    <property type="project" value="UniProtKB-UniRule"/>
</dbReference>
<dbReference type="CDD" id="cd00349">
    <property type="entry name" value="Ribosomal_L11"/>
    <property type="match status" value="1"/>
</dbReference>
<dbReference type="FunFam" id="1.10.10.250:FF:000001">
    <property type="entry name" value="50S ribosomal protein L11"/>
    <property type="match status" value="1"/>
</dbReference>
<dbReference type="FunFam" id="3.30.1550.10:FF:000001">
    <property type="entry name" value="50S ribosomal protein L11"/>
    <property type="match status" value="1"/>
</dbReference>
<dbReference type="Gene3D" id="1.10.10.250">
    <property type="entry name" value="Ribosomal protein L11, C-terminal domain"/>
    <property type="match status" value="1"/>
</dbReference>
<dbReference type="Gene3D" id="3.30.1550.10">
    <property type="entry name" value="Ribosomal protein L11/L12, N-terminal domain"/>
    <property type="match status" value="1"/>
</dbReference>
<dbReference type="HAMAP" id="MF_00736">
    <property type="entry name" value="Ribosomal_uL11"/>
    <property type="match status" value="1"/>
</dbReference>
<dbReference type="InterPro" id="IPR000911">
    <property type="entry name" value="Ribosomal_uL11"/>
</dbReference>
<dbReference type="InterPro" id="IPR006519">
    <property type="entry name" value="Ribosomal_uL11_bac-typ"/>
</dbReference>
<dbReference type="InterPro" id="IPR020783">
    <property type="entry name" value="Ribosomal_uL11_C"/>
</dbReference>
<dbReference type="InterPro" id="IPR036769">
    <property type="entry name" value="Ribosomal_uL11_C_sf"/>
</dbReference>
<dbReference type="InterPro" id="IPR020785">
    <property type="entry name" value="Ribosomal_uL11_CS"/>
</dbReference>
<dbReference type="InterPro" id="IPR020784">
    <property type="entry name" value="Ribosomal_uL11_N"/>
</dbReference>
<dbReference type="InterPro" id="IPR036796">
    <property type="entry name" value="Ribosomal_uL11_N_sf"/>
</dbReference>
<dbReference type="NCBIfam" id="TIGR01632">
    <property type="entry name" value="L11_bact"/>
    <property type="match status" value="1"/>
</dbReference>
<dbReference type="PANTHER" id="PTHR11661">
    <property type="entry name" value="60S RIBOSOMAL PROTEIN L12"/>
    <property type="match status" value="1"/>
</dbReference>
<dbReference type="PANTHER" id="PTHR11661:SF1">
    <property type="entry name" value="LARGE RIBOSOMAL SUBUNIT PROTEIN UL11M"/>
    <property type="match status" value="1"/>
</dbReference>
<dbReference type="Pfam" id="PF00298">
    <property type="entry name" value="Ribosomal_L11"/>
    <property type="match status" value="1"/>
</dbReference>
<dbReference type="Pfam" id="PF03946">
    <property type="entry name" value="Ribosomal_L11_N"/>
    <property type="match status" value="1"/>
</dbReference>
<dbReference type="SMART" id="SM00649">
    <property type="entry name" value="RL11"/>
    <property type="match status" value="1"/>
</dbReference>
<dbReference type="SUPFAM" id="SSF54747">
    <property type="entry name" value="Ribosomal L11/L12e N-terminal domain"/>
    <property type="match status" value="1"/>
</dbReference>
<dbReference type="SUPFAM" id="SSF46906">
    <property type="entry name" value="Ribosomal protein L11, C-terminal domain"/>
    <property type="match status" value="1"/>
</dbReference>
<dbReference type="PROSITE" id="PS00359">
    <property type="entry name" value="RIBOSOMAL_L11"/>
    <property type="match status" value="1"/>
</dbReference>
<gene>
    <name evidence="1" type="primary">rplK</name>
    <name type="ordered locus">Bcep18194_A3435</name>
</gene>
<sequence length="143" mass="14916">MAKKIIGFIKLQIPAGKANPSPPVGPALGQRGLNIMEFCKAFNAQTQGMEPGLPVPVVITAFADKSFTFVMKTPPATVLIKKAAKVDKGSSKPHTDKVGSITRAQAEEIAKTKMPDLTAADLDAAVRTIAGSARSMGITVEGV</sequence>
<protein>
    <recommendedName>
        <fullName evidence="1">Large ribosomal subunit protein uL11</fullName>
    </recommendedName>
    <alternativeName>
        <fullName evidence="2">50S ribosomal protein L11</fullName>
    </alternativeName>
</protein>
<accession>Q39KH9</accession>
<feature type="chain" id="PRO_0000258130" description="Large ribosomal subunit protein uL11">
    <location>
        <begin position="1"/>
        <end position="143"/>
    </location>
</feature>
<reference key="1">
    <citation type="submission" date="2005-10" db="EMBL/GenBank/DDBJ databases">
        <title>Complete sequence of chromosome 1 of Burkholderia sp. 383.</title>
        <authorList>
            <consortium name="US DOE Joint Genome Institute"/>
            <person name="Copeland A."/>
            <person name="Lucas S."/>
            <person name="Lapidus A."/>
            <person name="Barry K."/>
            <person name="Detter J.C."/>
            <person name="Glavina T."/>
            <person name="Hammon N."/>
            <person name="Israni S."/>
            <person name="Pitluck S."/>
            <person name="Chain P."/>
            <person name="Malfatti S."/>
            <person name="Shin M."/>
            <person name="Vergez L."/>
            <person name="Schmutz J."/>
            <person name="Larimer F."/>
            <person name="Land M."/>
            <person name="Kyrpides N."/>
            <person name="Lykidis A."/>
            <person name="Richardson P."/>
        </authorList>
    </citation>
    <scope>NUCLEOTIDE SEQUENCE [LARGE SCALE GENOMIC DNA]</scope>
    <source>
        <strain>ATCC 17760 / DSM 23089 / LMG 22485 / NCIMB 9086 / R18194 / 383</strain>
    </source>
</reference>
<keyword id="KW-0488">Methylation</keyword>
<keyword id="KW-0687">Ribonucleoprotein</keyword>
<keyword id="KW-0689">Ribosomal protein</keyword>
<keyword id="KW-0694">RNA-binding</keyword>
<keyword id="KW-0699">rRNA-binding</keyword>
<comment type="function">
    <text evidence="1">Forms part of the ribosomal stalk which helps the ribosome interact with GTP-bound translation factors.</text>
</comment>
<comment type="subunit">
    <text evidence="1">Part of the ribosomal stalk of the 50S ribosomal subunit. Interacts with L10 and the large rRNA to form the base of the stalk. L10 forms an elongated spine to which L12 dimers bind in a sequential fashion forming a multimeric L10(L12)X complex.</text>
</comment>
<comment type="PTM">
    <text evidence="1">One or more lysine residues are methylated.</text>
</comment>
<comment type="similarity">
    <text evidence="1">Belongs to the universal ribosomal protein uL11 family.</text>
</comment>
<proteinExistence type="inferred from homology"/>